<protein>
    <recommendedName>
        <fullName evidence="1">Adaptive-response sensory kinase SasA</fullName>
        <ecNumber evidence="1">2.7.13.3</ecNumber>
    </recommendedName>
    <alternativeName>
        <fullName evidence="1">Sensor histidine kinase SasA</fullName>
    </alternativeName>
</protein>
<dbReference type="EC" id="2.7.13.3" evidence="1"/>
<dbReference type="EMBL" id="CP000554">
    <property type="protein sequence ID" value="ABM77694.1"/>
    <property type="molecule type" value="Genomic_DNA"/>
</dbReference>
<dbReference type="RefSeq" id="WP_011825600.1">
    <property type="nucleotide sequence ID" value="NC_008820.1"/>
</dbReference>
<dbReference type="SMR" id="A2C884"/>
<dbReference type="STRING" id="59922.P9303_09431"/>
<dbReference type="KEGG" id="pmf:P9303_09431"/>
<dbReference type="HOGENOM" id="CLU_723030_0_0_3"/>
<dbReference type="BioCyc" id="PMAR59922:G1G80-856-MONOMER"/>
<dbReference type="Proteomes" id="UP000002274">
    <property type="component" value="Chromosome"/>
</dbReference>
<dbReference type="GO" id="GO:0005524">
    <property type="term" value="F:ATP binding"/>
    <property type="evidence" value="ECO:0007669"/>
    <property type="project" value="UniProtKB-KW"/>
</dbReference>
<dbReference type="GO" id="GO:0000155">
    <property type="term" value="F:phosphorelay sensor kinase activity"/>
    <property type="evidence" value="ECO:0007669"/>
    <property type="project" value="InterPro"/>
</dbReference>
<dbReference type="GO" id="GO:0007623">
    <property type="term" value="P:circadian rhythm"/>
    <property type="evidence" value="ECO:0007669"/>
    <property type="project" value="UniProtKB-UniRule"/>
</dbReference>
<dbReference type="CDD" id="cd00075">
    <property type="entry name" value="HATPase"/>
    <property type="match status" value="1"/>
</dbReference>
<dbReference type="CDD" id="cd00082">
    <property type="entry name" value="HisKA"/>
    <property type="match status" value="1"/>
</dbReference>
<dbReference type="FunFam" id="3.30.565.10:FF:000006">
    <property type="entry name" value="Sensor histidine kinase WalK"/>
    <property type="match status" value="1"/>
</dbReference>
<dbReference type="Gene3D" id="1.10.287.130">
    <property type="match status" value="1"/>
</dbReference>
<dbReference type="Gene3D" id="3.40.30.10">
    <property type="entry name" value="Glutaredoxin"/>
    <property type="match status" value="1"/>
</dbReference>
<dbReference type="Gene3D" id="3.30.565.10">
    <property type="entry name" value="Histidine kinase-like ATPase, C-terminal domain"/>
    <property type="match status" value="1"/>
</dbReference>
<dbReference type="HAMAP" id="MF_01837">
    <property type="entry name" value="Kinase_SasA"/>
    <property type="match status" value="1"/>
</dbReference>
<dbReference type="InterPro" id="IPR036890">
    <property type="entry name" value="HATPase_C_sf"/>
</dbReference>
<dbReference type="InterPro" id="IPR005467">
    <property type="entry name" value="His_kinase_dom"/>
</dbReference>
<dbReference type="InterPro" id="IPR003661">
    <property type="entry name" value="HisK_dim/P_dom"/>
</dbReference>
<dbReference type="InterPro" id="IPR036097">
    <property type="entry name" value="HisK_dim/P_sf"/>
</dbReference>
<dbReference type="InterPro" id="IPR011649">
    <property type="entry name" value="KaiB_domain"/>
</dbReference>
<dbReference type="InterPro" id="IPR023527">
    <property type="entry name" value="Kinase_SasA"/>
</dbReference>
<dbReference type="InterPro" id="IPR050736">
    <property type="entry name" value="Sensor_HK_Regulatory"/>
</dbReference>
<dbReference type="InterPro" id="IPR004358">
    <property type="entry name" value="Sig_transdc_His_kin-like_C"/>
</dbReference>
<dbReference type="InterPro" id="IPR036249">
    <property type="entry name" value="Thioredoxin-like_sf"/>
</dbReference>
<dbReference type="NCBIfam" id="NF006800">
    <property type="entry name" value="PRK09303.1"/>
    <property type="match status" value="1"/>
</dbReference>
<dbReference type="PANTHER" id="PTHR43711:SF26">
    <property type="entry name" value="SENSOR HISTIDINE KINASE RCSC"/>
    <property type="match status" value="1"/>
</dbReference>
<dbReference type="PANTHER" id="PTHR43711">
    <property type="entry name" value="TWO-COMPONENT HISTIDINE KINASE"/>
    <property type="match status" value="1"/>
</dbReference>
<dbReference type="Pfam" id="PF02518">
    <property type="entry name" value="HATPase_c"/>
    <property type="match status" value="1"/>
</dbReference>
<dbReference type="Pfam" id="PF07689">
    <property type="entry name" value="KaiB"/>
    <property type="match status" value="1"/>
</dbReference>
<dbReference type="PRINTS" id="PR00344">
    <property type="entry name" value="BCTRLSENSOR"/>
</dbReference>
<dbReference type="SMART" id="SM00387">
    <property type="entry name" value="HATPase_c"/>
    <property type="match status" value="1"/>
</dbReference>
<dbReference type="SMART" id="SM01248">
    <property type="entry name" value="KaiB"/>
    <property type="match status" value="1"/>
</dbReference>
<dbReference type="SUPFAM" id="SSF55874">
    <property type="entry name" value="ATPase domain of HSP90 chaperone/DNA topoisomerase II/histidine kinase"/>
    <property type="match status" value="1"/>
</dbReference>
<dbReference type="SUPFAM" id="SSF47384">
    <property type="entry name" value="Homodimeric domain of signal transducing histidine kinase"/>
    <property type="match status" value="1"/>
</dbReference>
<dbReference type="SUPFAM" id="SSF52833">
    <property type="entry name" value="Thioredoxin-like"/>
    <property type="match status" value="1"/>
</dbReference>
<dbReference type="PROSITE" id="PS50109">
    <property type="entry name" value="HIS_KIN"/>
    <property type="match status" value="1"/>
</dbReference>
<gene>
    <name evidence="1" type="primary">sasA</name>
    <name type="ordered locus">P9303_09431</name>
</gene>
<accession>A2C884</accession>
<proteinExistence type="inferred from homology"/>
<organism>
    <name type="scientific">Prochlorococcus marinus (strain MIT 9303)</name>
    <dbReference type="NCBI Taxonomy" id="59922"/>
    <lineage>
        <taxon>Bacteria</taxon>
        <taxon>Bacillati</taxon>
        <taxon>Cyanobacteriota</taxon>
        <taxon>Cyanophyceae</taxon>
        <taxon>Synechococcales</taxon>
        <taxon>Prochlorococcaceae</taxon>
        <taxon>Prochlorococcus</taxon>
    </lineage>
</organism>
<reference key="1">
    <citation type="journal article" date="2007" name="PLoS Genet.">
        <title>Patterns and implications of gene gain and loss in the evolution of Prochlorococcus.</title>
        <authorList>
            <person name="Kettler G.C."/>
            <person name="Martiny A.C."/>
            <person name="Huang K."/>
            <person name="Zucker J."/>
            <person name="Coleman M.L."/>
            <person name="Rodrigue S."/>
            <person name="Chen F."/>
            <person name="Lapidus A."/>
            <person name="Ferriera S."/>
            <person name="Johnson J."/>
            <person name="Steglich C."/>
            <person name="Church G.M."/>
            <person name="Richardson P."/>
            <person name="Chisholm S.W."/>
        </authorList>
    </citation>
    <scope>NUCLEOTIDE SEQUENCE [LARGE SCALE GENOMIC DNA]</scope>
    <source>
        <strain>MIT 9303</strain>
    </source>
</reference>
<comment type="function">
    <text evidence="1">Member of the two-component regulatory system SasA/RpaA involved in genome-wide circadian gene expression. One of several clock output pathways. Participates in the Kai clock protein complex, the main circadian regulator in cyanobacteria, via its interaction with KaiC. KaiC enhances the autophosphorylation activity of SasA, which then transfers its phosphate group to RpaA to activate it. In addition to its output function, recruits fold-shifted KaiB (KaiB(fs)) to KaiC to cooperatively form the KaiB(6):KaiC(6) complex (independent of SasA kinase activity). Required for robustness of the circadian rhythm of gene expression and is involved in clock output, also required for adaptation to light/dark cycles.</text>
</comment>
<comment type="catalytic activity">
    <reaction evidence="1">
        <text>ATP + protein L-histidine = ADP + protein N-phospho-L-histidine.</text>
        <dbReference type="EC" id="2.7.13.3"/>
    </reaction>
</comment>
<comment type="subunit">
    <text evidence="1">Homooligomerizes. Interacts with KaiC. Participates in the KaiBC complex, whose core is composed of a KaiC homohexamer and 6 KaiB.</text>
</comment>
<comment type="domain">
    <text evidence="1">The N-terminus interacts with KaiC, while the C-terminal histidine kinase domain autophosphorylates and is probably responsible for self-oligomerization. The N-terminal domain stimulates the C-terminus to autophosphorylate.</text>
</comment>
<keyword id="KW-0067">ATP-binding</keyword>
<keyword id="KW-0090">Biological rhythms</keyword>
<keyword id="KW-0418">Kinase</keyword>
<keyword id="KW-0547">Nucleotide-binding</keyword>
<keyword id="KW-0597">Phosphoprotein</keyword>
<keyword id="KW-0808">Transferase</keyword>
<keyword id="KW-0902">Two-component regulatory system</keyword>
<evidence type="ECO:0000255" key="1">
    <source>
        <dbReference type="HAMAP-Rule" id="MF_01837"/>
    </source>
</evidence>
<name>SASA_PROM3</name>
<feature type="chain" id="PRO_1000088443" description="Adaptive-response sensory kinase SasA">
    <location>
        <begin position="1"/>
        <end position="370"/>
    </location>
</feature>
<feature type="domain" description="Histidine kinase" evidence="1">
    <location>
        <begin position="152"/>
        <end position="365"/>
    </location>
</feature>
<feature type="modified residue" description="Phosphohistidine; by autocatalysis" evidence="1">
    <location>
        <position position="155"/>
    </location>
</feature>
<sequence length="370" mass="42224">MDGVKANQRQQLQLLLVAARHQLSRSDLRSMIQFLENEDCGFDVTLQMADPSEQPELLELHRLVATPALIKLSPTPKQVFAGSSIFQQLQNWITRWQQDIVVTGLGLSLRPTELDGSRTQRELQLEDQLLVLRQENETLIDRLNAQERTLRMVAHELRTPLTAAVLALQSQQLGQINIEHFQDVVKRRLDEIELLSKDLLEVKSTRWEDLFNPQNLDLGNIAAEAILELEKLWLDRNIEIHTDIPSDLPKVFADQRRMRQVLLNLLENALKFTEDGGQVSLSMLHRTSQWVQVSICDNGPGIPEDEQERIFLDRVRLPQTSVTTSGFGVGLSVCRRIVEVHGGKIWVVSEPDKGACFYLTVPVWQRNGQE</sequence>